<keyword id="KW-0963">Cytoplasm</keyword>
<keyword id="KW-0489">Methyltransferase</keyword>
<keyword id="KW-1185">Reference proteome</keyword>
<keyword id="KW-0694">RNA-binding</keyword>
<keyword id="KW-0698">rRNA processing</keyword>
<keyword id="KW-0949">S-adenosyl-L-methionine</keyword>
<keyword id="KW-0808">Transferase</keyword>
<name>RLMI_PSET1</name>
<dbReference type="EC" id="2.1.1.191" evidence="1"/>
<dbReference type="EMBL" id="CR954246">
    <property type="protein sequence ID" value="CAI86222.1"/>
    <property type="molecule type" value="Genomic_DNA"/>
</dbReference>
<dbReference type="SMR" id="Q3IKJ0"/>
<dbReference type="STRING" id="326442.PSHAa1147"/>
<dbReference type="KEGG" id="pha:PSHAa1147"/>
<dbReference type="eggNOG" id="COG1092">
    <property type="taxonomic scope" value="Bacteria"/>
</dbReference>
<dbReference type="HOGENOM" id="CLU_014042_0_0_6"/>
<dbReference type="BioCyc" id="PHAL326442:PSHA_RS05690-MONOMER"/>
<dbReference type="Proteomes" id="UP000006843">
    <property type="component" value="Chromosome I"/>
</dbReference>
<dbReference type="GO" id="GO:0005737">
    <property type="term" value="C:cytoplasm"/>
    <property type="evidence" value="ECO:0007669"/>
    <property type="project" value="UniProtKB-SubCell"/>
</dbReference>
<dbReference type="GO" id="GO:0003723">
    <property type="term" value="F:RNA binding"/>
    <property type="evidence" value="ECO:0007669"/>
    <property type="project" value="UniProtKB-KW"/>
</dbReference>
<dbReference type="GO" id="GO:0016434">
    <property type="term" value="F:rRNA (cytosine) methyltransferase activity"/>
    <property type="evidence" value="ECO:0007669"/>
    <property type="project" value="UniProtKB-UniRule"/>
</dbReference>
<dbReference type="CDD" id="cd02440">
    <property type="entry name" value="AdoMet_MTases"/>
    <property type="match status" value="1"/>
</dbReference>
<dbReference type="CDD" id="cd21153">
    <property type="entry name" value="PUA_RlmI"/>
    <property type="match status" value="1"/>
</dbReference>
<dbReference type="CDD" id="cd11572">
    <property type="entry name" value="RlmI_M_like"/>
    <property type="match status" value="1"/>
</dbReference>
<dbReference type="Gene3D" id="2.30.130.10">
    <property type="entry name" value="PUA domain"/>
    <property type="match status" value="1"/>
</dbReference>
<dbReference type="Gene3D" id="3.30.750.80">
    <property type="entry name" value="RNA methyltransferase domain (HRMD) like"/>
    <property type="match status" value="1"/>
</dbReference>
<dbReference type="Gene3D" id="3.40.50.150">
    <property type="entry name" value="Vaccinia Virus protein VP39"/>
    <property type="match status" value="1"/>
</dbReference>
<dbReference type="HAMAP" id="MF_01857">
    <property type="entry name" value="23SrRNA_methyltr_I"/>
    <property type="match status" value="1"/>
</dbReference>
<dbReference type="InterPro" id="IPR002478">
    <property type="entry name" value="PUA"/>
</dbReference>
<dbReference type="InterPro" id="IPR015947">
    <property type="entry name" value="PUA-like_sf"/>
</dbReference>
<dbReference type="InterPro" id="IPR036974">
    <property type="entry name" value="PUA_sf"/>
</dbReference>
<dbReference type="InterPro" id="IPR023542">
    <property type="entry name" value="RLMI"/>
</dbReference>
<dbReference type="InterPro" id="IPR041532">
    <property type="entry name" value="RlmI-like_PUA"/>
</dbReference>
<dbReference type="InterPro" id="IPR019614">
    <property type="entry name" value="SAM-dep_methyl-trfase"/>
</dbReference>
<dbReference type="InterPro" id="IPR029063">
    <property type="entry name" value="SAM-dependent_MTases_sf"/>
</dbReference>
<dbReference type="PANTHER" id="PTHR42873">
    <property type="entry name" value="RIBOSOMAL RNA LARGE SUBUNIT METHYLTRANSFERASE"/>
    <property type="match status" value="1"/>
</dbReference>
<dbReference type="PANTHER" id="PTHR42873:SF1">
    <property type="entry name" value="S-ADENOSYLMETHIONINE-DEPENDENT METHYLTRANSFERASE DOMAIN-CONTAINING PROTEIN"/>
    <property type="match status" value="1"/>
</dbReference>
<dbReference type="Pfam" id="PF10672">
    <property type="entry name" value="Methyltrans_SAM"/>
    <property type="match status" value="1"/>
</dbReference>
<dbReference type="Pfam" id="PF17785">
    <property type="entry name" value="PUA_3"/>
    <property type="match status" value="1"/>
</dbReference>
<dbReference type="SMART" id="SM00359">
    <property type="entry name" value="PUA"/>
    <property type="match status" value="1"/>
</dbReference>
<dbReference type="SUPFAM" id="SSF88697">
    <property type="entry name" value="PUA domain-like"/>
    <property type="match status" value="1"/>
</dbReference>
<dbReference type="SUPFAM" id="SSF53335">
    <property type="entry name" value="S-adenosyl-L-methionine-dependent methyltransferases"/>
    <property type="match status" value="1"/>
</dbReference>
<dbReference type="PROSITE" id="PS50890">
    <property type="entry name" value="PUA"/>
    <property type="match status" value="1"/>
</dbReference>
<comment type="function">
    <text evidence="1">Specifically methylates the cytosine at position 1962 (m5C1962) of 23S rRNA.</text>
</comment>
<comment type="catalytic activity">
    <reaction evidence="1">
        <text>cytidine(1962) in 23S rRNA + S-adenosyl-L-methionine = 5-methylcytidine(1962) in 23S rRNA + S-adenosyl-L-homocysteine + H(+)</text>
        <dbReference type="Rhea" id="RHEA:42912"/>
        <dbReference type="Rhea" id="RHEA-COMP:10382"/>
        <dbReference type="Rhea" id="RHEA-COMP:10386"/>
        <dbReference type="ChEBI" id="CHEBI:15378"/>
        <dbReference type="ChEBI" id="CHEBI:57856"/>
        <dbReference type="ChEBI" id="CHEBI:59789"/>
        <dbReference type="ChEBI" id="CHEBI:74483"/>
        <dbReference type="ChEBI" id="CHEBI:82748"/>
        <dbReference type="EC" id="2.1.1.191"/>
    </reaction>
</comment>
<comment type="subcellular location">
    <subcellularLocation>
        <location evidence="1">Cytoplasm</location>
    </subcellularLocation>
</comment>
<comment type="similarity">
    <text evidence="1">Belongs to the methyltransferase superfamily. RlmI family.</text>
</comment>
<sequence length="396" mass="44105">MTSAVYLQAGRDKSLKRKHPWLFSKAIKKIKGKPGLGDTVTIHDSEGKFLATAAYSPHSQIRARVWSFDEKEVIDQHFFERRLRRALEARSQVIEEGGLTGFRLCAAESDFLPGVTIDKFDNVLVCQLLSAGAERHKGEIVGALMAIFPGMSIYERSDVEVRTKEGLEPIKGALWGNEPTAPVLIAENGFKIEVDIIDGHKTGFYLDQRDSRAALERFSKDKTVLNCFSYTGTFSLYALRGGCKHVTNVDVSQPALDTAKRNVEHNNLDLDKVDFVKQDVFKLLRQYREDGVLFDTIVMDPPKFADNKAQLTGACRGYKDINMIAMQILKPGGTLLTFSCSGLMEQNLFQKVVADAALDAGKDLLIMERLNQAADHPIAGSYPEGFYLKGLICKVY</sequence>
<evidence type="ECO:0000255" key="1">
    <source>
        <dbReference type="HAMAP-Rule" id="MF_01857"/>
    </source>
</evidence>
<proteinExistence type="inferred from homology"/>
<gene>
    <name evidence="1" type="primary">rlmI</name>
    <name type="ordered locus">PSHAa1147</name>
</gene>
<organism>
    <name type="scientific">Pseudoalteromonas translucida (strain TAC 125)</name>
    <dbReference type="NCBI Taxonomy" id="326442"/>
    <lineage>
        <taxon>Bacteria</taxon>
        <taxon>Pseudomonadati</taxon>
        <taxon>Pseudomonadota</taxon>
        <taxon>Gammaproteobacteria</taxon>
        <taxon>Alteromonadales</taxon>
        <taxon>Pseudoalteromonadaceae</taxon>
        <taxon>Pseudoalteromonas</taxon>
    </lineage>
</organism>
<accession>Q3IKJ0</accession>
<reference key="1">
    <citation type="journal article" date="2005" name="Genome Res.">
        <title>Coping with cold: the genome of the versatile marine Antarctica bacterium Pseudoalteromonas haloplanktis TAC125.</title>
        <authorList>
            <person name="Medigue C."/>
            <person name="Krin E."/>
            <person name="Pascal G."/>
            <person name="Barbe V."/>
            <person name="Bernsel A."/>
            <person name="Bertin P.N."/>
            <person name="Cheung F."/>
            <person name="Cruveiller S."/>
            <person name="D'Amico S."/>
            <person name="Duilio A."/>
            <person name="Fang G."/>
            <person name="Feller G."/>
            <person name="Ho C."/>
            <person name="Mangenot S."/>
            <person name="Marino G."/>
            <person name="Nilsson J."/>
            <person name="Parrilli E."/>
            <person name="Rocha E.P.C."/>
            <person name="Rouy Z."/>
            <person name="Sekowska A."/>
            <person name="Tutino M.L."/>
            <person name="Vallenet D."/>
            <person name="von Heijne G."/>
            <person name="Danchin A."/>
        </authorList>
    </citation>
    <scope>NUCLEOTIDE SEQUENCE [LARGE SCALE GENOMIC DNA]</scope>
    <source>
        <strain>TAC 125</strain>
    </source>
</reference>
<feature type="chain" id="PRO_0000366238" description="Ribosomal RNA large subunit methyltransferase I">
    <location>
        <begin position="1"/>
        <end position="396"/>
    </location>
</feature>
<feature type="domain" description="PUA" evidence="1">
    <location>
        <begin position="2"/>
        <end position="79"/>
    </location>
</feature>
<protein>
    <recommendedName>
        <fullName evidence="1">Ribosomal RNA large subunit methyltransferase I</fullName>
        <ecNumber evidence="1">2.1.1.191</ecNumber>
    </recommendedName>
    <alternativeName>
        <fullName evidence="1">23S rRNA m5C1962 methyltransferase</fullName>
    </alternativeName>
    <alternativeName>
        <fullName evidence="1">rRNA (cytosine-C(5)-)-methyltransferase RlmI</fullName>
    </alternativeName>
</protein>